<name>RECR_STRP1</name>
<organism>
    <name type="scientific">Streptococcus pyogenes serotype M1</name>
    <dbReference type="NCBI Taxonomy" id="301447"/>
    <lineage>
        <taxon>Bacteria</taxon>
        <taxon>Bacillati</taxon>
        <taxon>Bacillota</taxon>
        <taxon>Bacilli</taxon>
        <taxon>Lactobacillales</taxon>
        <taxon>Streptococcaceae</taxon>
        <taxon>Streptococcus</taxon>
    </lineage>
</organism>
<gene>
    <name evidence="1" type="primary">recR</name>
    <name type="ordered locus">SPy_1422</name>
    <name type="ordered locus">M5005_Spy1159</name>
</gene>
<protein>
    <recommendedName>
        <fullName evidence="1">Recombination protein RecR</fullName>
    </recommendedName>
</protein>
<accession>P65994</accession>
<accession>Q48XZ8</accession>
<accession>Q99Z33</accession>
<feature type="chain" id="PRO_0000190400" description="Recombination protein RecR">
    <location>
        <begin position="1"/>
        <end position="198"/>
    </location>
</feature>
<feature type="domain" description="Toprim" evidence="1">
    <location>
        <begin position="80"/>
        <end position="175"/>
    </location>
</feature>
<feature type="zinc finger region" description="C4-type" evidence="1">
    <location>
        <begin position="57"/>
        <end position="72"/>
    </location>
</feature>
<sequence length="198" mass="21645">MLYPTPIAKLIDSYSKLPGIGIKTATRLAFYTIGMSNEDVNDFAKNLLAAKRELTYCSICGNLTDDDPCHICTDTSRDQTTILVVEDAKDVSAMEKIQEYHGYYHVLHGLISPMNGVGPDDINLKSLITRLMDGKVSEVIVATNATADGEATSMYISRVLKPAGIKVTRLARGLAVGSDIEYADEVTLLRAIENRTEL</sequence>
<comment type="function">
    <text evidence="1">May play a role in DNA repair. It seems to be involved in an RecBC-independent recombinational process of DNA repair. It may act with RecF and RecO.</text>
</comment>
<comment type="similarity">
    <text evidence="1">Belongs to the RecR family.</text>
</comment>
<evidence type="ECO:0000255" key="1">
    <source>
        <dbReference type="HAMAP-Rule" id="MF_00017"/>
    </source>
</evidence>
<reference key="1">
    <citation type="journal article" date="2001" name="Proc. Natl. Acad. Sci. U.S.A.">
        <title>Complete genome sequence of an M1 strain of Streptococcus pyogenes.</title>
        <authorList>
            <person name="Ferretti J.J."/>
            <person name="McShan W.M."/>
            <person name="Ajdic D.J."/>
            <person name="Savic D.J."/>
            <person name="Savic G."/>
            <person name="Lyon K."/>
            <person name="Primeaux C."/>
            <person name="Sezate S."/>
            <person name="Suvorov A.N."/>
            <person name="Kenton S."/>
            <person name="Lai H.S."/>
            <person name="Lin S.P."/>
            <person name="Qian Y."/>
            <person name="Jia H.G."/>
            <person name="Najar F.Z."/>
            <person name="Ren Q."/>
            <person name="Zhu H."/>
            <person name="Song L."/>
            <person name="White J."/>
            <person name="Yuan X."/>
            <person name="Clifton S.W."/>
            <person name="Roe B.A."/>
            <person name="McLaughlin R.E."/>
        </authorList>
    </citation>
    <scope>NUCLEOTIDE SEQUENCE [LARGE SCALE GENOMIC DNA]</scope>
    <source>
        <strain>ATCC 700294 / SF370 / Serotype M1</strain>
    </source>
</reference>
<reference key="2">
    <citation type="journal article" date="2005" name="J. Infect. Dis.">
        <title>Evolutionary origin and emergence of a highly successful clone of serotype M1 group A Streptococcus involved multiple horizontal gene transfer events.</title>
        <authorList>
            <person name="Sumby P."/>
            <person name="Porcella S.F."/>
            <person name="Madrigal A.G."/>
            <person name="Barbian K.D."/>
            <person name="Virtaneva K."/>
            <person name="Ricklefs S.M."/>
            <person name="Sturdevant D.E."/>
            <person name="Graham M.R."/>
            <person name="Vuopio-Varkila J."/>
            <person name="Hoe N.P."/>
            <person name="Musser J.M."/>
        </authorList>
    </citation>
    <scope>NUCLEOTIDE SEQUENCE [LARGE SCALE GENOMIC DNA]</scope>
    <source>
        <strain>ATCC BAA-947 / MGAS5005 / Serotype M1</strain>
    </source>
</reference>
<dbReference type="EMBL" id="AE004092">
    <property type="protein sequence ID" value="AAK34234.1"/>
    <property type="molecule type" value="Genomic_DNA"/>
</dbReference>
<dbReference type="EMBL" id="CP000017">
    <property type="protein sequence ID" value="AAZ51777.1"/>
    <property type="molecule type" value="Genomic_DNA"/>
</dbReference>
<dbReference type="RefSeq" id="NP_269513.1">
    <property type="nucleotide sequence ID" value="NC_002737.2"/>
</dbReference>
<dbReference type="SMR" id="P65994"/>
<dbReference type="PaxDb" id="1314-HKU360_01194"/>
<dbReference type="KEGG" id="spy:SPy_1422"/>
<dbReference type="KEGG" id="spz:M5005_Spy1159"/>
<dbReference type="PATRIC" id="fig|160490.10.peg.1238"/>
<dbReference type="HOGENOM" id="CLU_060739_1_0_9"/>
<dbReference type="OMA" id="DVMAIEN"/>
<dbReference type="Proteomes" id="UP000000750">
    <property type="component" value="Chromosome"/>
</dbReference>
<dbReference type="GO" id="GO:0003677">
    <property type="term" value="F:DNA binding"/>
    <property type="evidence" value="ECO:0007669"/>
    <property type="project" value="UniProtKB-UniRule"/>
</dbReference>
<dbReference type="GO" id="GO:0008270">
    <property type="term" value="F:zinc ion binding"/>
    <property type="evidence" value="ECO:0007669"/>
    <property type="project" value="UniProtKB-KW"/>
</dbReference>
<dbReference type="GO" id="GO:0006310">
    <property type="term" value="P:DNA recombination"/>
    <property type="evidence" value="ECO:0007669"/>
    <property type="project" value="UniProtKB-UniRule"/>
</dbReference>
<dbReference type="GO" id="GO:0006281">
    <property type="term" value="P:DNA repair"/>
    <property type="evidence" value="ECO:0007669"/>
    <property type="project" value="UniProtKB-UniRule"/>
</dbReference>
<dbReference type="CDD" id="cd01025">
    <property type="entry name" value="TOPRIM_recR"/>
    <property type="match status" value="1"/>
</dbReference>
<dbReference type="Gene3D" id="3.30.60.80">
    <property type="match status" value="1"/>
</dbReference>
<dbReference type="Gene3D" id="3.40.1360.10">
    <property type="match status" value="1"/>
</dbReference>
<dbReference type="Gene3D" id="6.10.250.240">
    <property type="match status" value="1"/>
</dbReference>
<dbReference type="Gene3D" id="1.10.8.420">
    <property type="entry name" value="RecR Domain 1"/>
    <property type="match status" value="1"/>
</dbReference>
<dbReference type="HAMAP" id="MF_00017">
    <property type="entry name" value="RecR"/>
    <property type="match status" value="1"/>
</dbReference>
<dbReference type="InterPro" id="IPR000093">
    <property type="entry name" value="DNA_Rcmb_RecR"/>
</dbReference>
<dbReference type="InterPro" id="IPR023627">
    <property type="entry name" value="Rcmb_RecR"/>
</dbReference>
<dbReference type="InterPro" id="IPR015967">
    <property type="entry name" value="Rcmb_RecR_Znf"/>
</dbReference>
<dbReference type="InterPro" id="IPR006171">
    <property type="entry name" value="TOPRIM_dom"/>
</dbReference>
<dbReference type="InterPro" id="IPR034137">
    <property type="entry name" value="TOPRIM_RecR"/>
</dbReference>
<dbReference type="NCBIfam" id="TIGR00615">
    <property type="entry name" value="recR"/>
    <property type="match status" value="1"/>
</dbReference>
<dbReference type="PANTHER" id="PTHR30446">
    <property type="entry name" value="RECOMBINATION PROTEIN RECR"/>
    <property type="match status" value="1"/>
</dbReference>
<dbReference type="PANTHER" id="PTHR30446:SF0">
    <property type="entry name" value="RECOMBINATION PROTEIN RECR"/>
    <property type="match status" value="1"/>
</dbReference>
<dbReference type="Pfam" id="PF21175">
    <property type="entry name" value="RecR_C"/>
    <property type="match status" value="1"/>
</dbReference>
<dbReference type="Pfam" id="PF21176">
    <property type="entry name" value="RecR_HhH"/>
    <property type="match status" value="1"/>
</dbReference>
<dbReference type="Pfam" id="PF02132">
    <property type="entry name" value="RecR_ZnF"/>
    <property type="match status" value="1"/>
</dbReference>
<dbReference type="Pfam" id="PF13662">
    <property type="entry name" value="Toprim_4"/>
    <property type="match status" value="1"/>
</dbReference>
<dbReference type="SMART" id="SM00493">
    <property type="entry name" value="TOPRIM"/>
    <property type="match status" value="1"/>
</dbReference>
<dbReference type="SUPFAM" id="SSF111304">
    <property type="entry name" value="Recombination protein RecR"/>
    <property type="match status" value="1"/>
</dbReference>
<dbReference type="PROSITE" id="PS01300">
    <property type="entry name" value="RECR"/>
    <property type="match status" value="1"/>
</dbReference>
<dbReference type="PROSITE" id="PS50880">
    <property type="entry name" value="TOPRIM"/>
    <property type="match status" value="1"/>
</dbReference>
<proteinExistence type="inferred from homology"/>
<keyword id="KW-0227">DNA damage</keyword>
<keyword id="KW-0233">DNA recombination</keyword>
<keyword id="KW-0234">DNA repair</keyword>
<keyword id="KW-0479">Metal-binding</keyword>
<keyword id="KW-1185">Reference proteome</keyword>
<keyword id="KW-0862">Zinc</keyword>
<keyword id="KW-0863">Zinc-finger</keyword>